<dbReference type="EC" id="3.1.1.31" evidence="1"/>
<dbReference type="EMBL" id="CU928145">
    <property type="protein sequence ID" value="CAU96615.1"/>
    <property type="molecule type" value="Genomic_DNA"/>
</dbReference>
<dbReference type="RefSeq" id="WP_000815435.1">
    <property type="nucleotide sequence ID" value="NZ_CP028304.1"/>
</dbReference>
<dbReference type="SMR" id="B7LB75"/>
<dbReference type="GeneID" id="86945650"/>
<dbReference type="KEGG" id="eck:EC55989_0747"/>
<dbReference type="HOGENOM" id="CLU_038716_2_0_6"/>
<dbReference type="UniPathway" id="UPA00115">
    <property type="reaction ID" value="UER00409"/>
</dbReference>
<dbReference type="Proteomes" id="UP000000746">
    <property type="component" value="Chromosome"/>
</dbReference>
<dbReference type="GO" id="GO:0005829">
    <property type="term" value="C:cytosol"/>
    <property type="evidence" value="ECO:0007669"/>
    <property type="project" value="TreeGrafter"/>
</dbReference>
<dbReference type="GO" id="GO:0017057">
    <property type="term" value="F:6-phosphogluconolactonase activity"/>
    <property type="evidence" value="ECO:0007669"/>
    <property type="project" value="UniProtKB-UniRule"/>
</dbReference>
<dbReference type="GO" id="GO:0006006">
    <property type="term" value="P:glucose metabolic process"/>
    <property type="evidence" value="ECO:0007669"/>
    <property type="project" value="UniProtKB-KW"/>
</dbReference>
<dbReference type="GO" id="GO:0009051">
    <property type="term" value="P:pentose-phosphate shunt, oxidative branch"/>
    <property type="evidence" value="ECO:0007669"/>
    <property type="project" value="UniProtKB-UniRule"/>
</dbReference>
<dbReference type="FunFam" id="2.130.10.10:FF:000051">
    <property type="entry name" value="6-phosphogluconolactonase"/>
    <property type="match status" value="1"/>
</dbReference>
<dbReference type="Gene3D" id="2.130.10.10">
    <property type="entry name" value="YVTN repeat-like/Quinoprotein amine dehydrogenase"/>
    <property type="match status" value="1"/>
</dbReference>
<dbReference type="HAMAP" id="MF_01605">
    <property type="entry name" value="6P_gluconolactonase"/>
    <property type="match status" value="1"/>
</dbReference>
<dbReference type="InterPro" id="IPR022528">
    <property type="entry name" value="6-phosphogluconolactonase_YbhE"/>
</dbReference>
<dbReference type="InterPro" id="IPR050282">
    <property type="entry name" value="Cycloisomerase_2"/>
</dbReference>
<dbReference type="InterPro" id="IPR019405">
    <property type="entry name" value="Lactonase_7-beta_prop"/>
</dbReference>
<dbReference type="InterPro" id="IPR011045">
    <property type="entry name" value="N2O_reductase_N"/>
</dbReference>
<dbReference type="InterPro" id="IPR015943">
    <property type="entry name" value="WD40/YVTN_repeat-like_dom_sf"/>
</dbReference>
<dbReference type="NCBIfam" id="NF008258">
    <property type="entry name" value="PRK11028.1"/>
    <property type="match status" value="1"/>
</dbReference>
<dbReference type="PANTHER" id="PTHR30344:SF1">
    <property type="entry name" value="6-PHOSPHOGLUCONOLACTONASE"/>
    <property type="match status" value="1"/>
</dbReference>
<dbReference type="PANTHER" id="PTHR30344">
    <property type="entry name" value="6-PHOSPHOGLUCONOLACTONASE-RELATED"/>
    <property type="match status" value="1"/>
</dbReference>
<dbReference type="Pfam" id="PF10282">
    <property type="entry name" value="Lactonase"/>
    <property type="match status" value="1"/>
</dbReference>
<dbReference type="SUPFAM" id="SSF50974">
    <property type="entry name" value="Nitrous oxide reductase, N-terminal domain"/>
    <property type="match status" value="1"/>
</dbReference>
<feature type="chain" id="PRO_1000185836" description="6-phosphogluconolactonase">
    <location>
        <begin position="1"/>
        <end position="331"/>
    </location>
</feature>
<feature type="modified residue" description="N6-acetyllysine" evidence="1">
    <location>
        <position position="287"/>
    </location>
</feature>
<gene>
    <name evidence="1" type="primary">pgl</name>
    <name type="ordered locus">EC55989_0747</name>
</gene>
<organism>
    <name type="scientific">Escherichia coli (strain 55989 / EAEC)</name>
    <dbReference type="NCBI Taxonomy" id="585055"/>
    <lineage>
        <taxon>Bacteria</taxon>
        <taxon>Pseudomonadati</taxon>
        <taxon>Pseudomonadota</taxon>
        <taxon>Gammaproteobacteria</taxon>
        <taxon>Enterobacterales</taxon>
        <taxon>Enterobacteriaceae</taxon>
        <taxon>Escherichia</taxon>
    </lineage>
</organism>
<comment type="function">
    <text evidence="1">Catalyzes the hydrolysis of 6-phosphogluconolactone to 6-phosphogluconate.</text>
</comment>
<comment type="catalytic activity">
    <reaction evidence="1">
        <text>6-phospho-D-glucono-1,5-lactone + H2O = 6-phospho-D-gluconate + H(+)</text>
        <dbReference type="Rhea" id="RHEA:12556"/>
        <dbReference type="ChEBI" id="CHEBI:15377"/>
        <dbReference type="ChEBI" id="CHEBI:15378"/>
        <dbReference type="ChEBI" id="CHEBI:57955"/>
        <dbReference type="ChEBI" id="CHEBI:58759"/>
        <dbReference type="EC" id="3.1.1.31"/>
    </reaction>
</comment>
<comment type="pathway">
    <text evidence="1">Carbohydrate degradation; pentose phosphate pathway; D-ribulose 5-phosphate from D-glucose 6-phosphate (oxidative stage): step 2/3.</text>
</comment>
<comment type="similarity">
    <text evidence="1">Belongs to the cycloisomerase 2 family.</text>
</comment>
<name>6PGL_ECO55</name>
<proteinExistence type="inferred from homology"/>
<keyword id="KW-0007">Acetylation</keyword>
<keyword id="KW-0119">Carbohydrate metabolism</keyword>
<keyword id="KW-0313">Glucose metabolism</keyword>
<keyword id="KW-0378">Hydrolase</keyword>
<keyword id="KW-1185">Reference proteome</keyword>
<accession>B7LB75</accession>
<sequence>MKQTVYIASPESQQIHVWNLNHEGALTLTQVVDVPGQVQPMVVSPDKRYLYVGVRPEFRVLAYRIAPDDGALTFAAESALPGSPTHISTDHQGQFVFVGSYNAGNVSVTRLEDGLPVGVVDVVEGLDGCHSANISPDNRTLWVPALKQDRICLFTVSDDGHLVAQDPAEVTTVEGAGPRHMVFHPNEQYAYCVNELNSSVDVWELKDPHGNIECVQTLDMMPENFSDTRWAADIHITPDGRHLYACDRTASLITVFSVSEDGSVLSKEGFQPTETQPRGFNVDHSGKYLIAAGQKSHHISVYEIVGEQGLLHEKGRYAVGQGPMWVVVNAH</sequence>
<reference key="1">
    <citation type="journal article" date="2009" name="PLoS Genet.">
        <title>Organised genome dynamics in the Escherichia coli species results in highly diverse adaptive paths.</title>
        <authorList>
            <person name="Touchon M."/>
            <person name="Hoede C."/>
            <person name="Tenaillon O."/>
            <person name="Barbe V."/>
            <person name="Baeriswyl S."/>
            <person name="Bidet P."/>
            <person name="Bingen E."/>
            <person name="Bonacorsi S."/>
            <person name="Bouchier C."/>
            <person name="Bouvet O."/>
            <person name="Calteau A."/>
            <person name="Chiapello H."/>
            <person name="Clermont O."/>
            <person name="Cruveiller S."/>
            <person name="Danchin A."/>
            <person name="Diard M."/>
            <person name="Dossat C."/>
            <person name="Karoui M.E."/>
            <person name="Frapy E."/>
            <person name="Garry L."/>
            <person name="Ghigo J.M."/>
            <person name="Gilles A.M."/>
            <person name="Johnson J."/>
            <person name="Le Bouguenec C."/>
            <person name="Lescat M."/>
            <person name="Mangenot S."/>
            <person name="Martinez-Jehanne V."/>
            <person name="Matic I."/>
            <person name="Nassif X."/>
            <person name="Oztas S."/>
            <person name="Petit M.A."/>
            <person name="Pichon C."/>
            <person name="Rouy Z."/>
            <person name="Ruf C.S."/>
            <person name="Schneider D."/>
            <person name="Tourret J."/>
            <person name="Vacherie B."/>
            <person name="Vallenet D."/>
            <person name="Medigue C."/>
            <person name="Rocha E.P.C."/>
            <person name="Denamur E."/>
        </authorList>
    </citation>
    <scope>NUCLEOTIDE SEQUENCE [LARGE SCALE GENOMIC DNA]</scope>
    <source>
        <strain>55989 / EAEC</strain>
    </source>
</reference>
<evidence type="ECO:0000255" key="1">
    <source>
        <dbReference type="HAMAP-Rule" id="MF_01605"/>
    </source>
</evidence>
<protein>
    <recommendedName>
        <fullName evidence="1">6-phosphogluconolactonase</fullName>
        <shortName evidence="1">6-P-gluconolactonase</shortName>
        <ecNumber evidence="1">3.1.1.31</ecNumber>
    </recommendedName>
</protein>